<organism>
    <name type="scientific">Mus musculus</name>
    <name type="common">Mouse</name>
    <dbReference type="NCBI Taxonomy" id="10090"/>
    <lineage>
        <taxon>Eukaryota</taxon>
        <taxon>Metazoa</taxon>
        <taxon>Chordata</taxon>
        <taxon>Craniata</taxon>
        <taxon>Vertebrata</taxon>
        <taxon>Euteleostomi</taxon>
        <taxon>Mammalia</taxon>
        <taxon>Eutheria</taxon>
        <taxon>Euarchontoglires</taxon>
        <taxon>Glires</taxon>
        <taxon>Rodentia</taxon>
        <taxon>Myomorpha</taxon>
        <taxon>Muroidea</taxon>
        <taxon>Muridae</taxon>
        <taxon>Murinae</taxon>
        <taxon>Mus</taxon>
        <taxon>Mus</taxon>
    </lineage>
</organism>
<proteinExistence type="evidence at transcript level"/>
<sequence>MEVAGYGTHNRDLKQWMVTLLSALSLMMVVVTIGLLALFLVFDIQVNSNSGQKSSNQLKDLQETNENLVDEIFIDSALNNRYIKNHVVGLTPEEDDTKADIVMVFQPPATGRRTVGKKTHHSILDQKTRNARALPADVSLVQVKDCGKRAIPLIANRIVSGNPAAKGAWPWQVSLQRSNIHQCGGTLIGNMWVVTAAHCFRTNSNPRQWTLSFGTTINPPLMKRDVRRIIMHERYRPPARDHDIALVQFSPRVTFSDEVRRICLPEPSASFPPNSTVYITGFGALYYGGESQNELREARVQIISNDICKKRHVYGNEIKRGMFCAGFLEGNYDACRGDSGGPLVIRDNKDTWYLIGIVSWGDNCGQKNKPGVYTQVTYYRHWIASKTGL</sequence>
<reference key="1">
    <citation type="journal article" date="2005" name="Science">
        <title>The transcriptional landscape of the mammalian genome.</title>
        <authorList>
            <person name="Carninci P."/>
            <person name="Kasukawa T."/>
            <person name="Katayama S."/>
            <person name="Gough J."/>
            <person name="Frith M.C."/>
            <person name="Maeda N."/>
            <person name="Oyama R."/>
            <person name="Ravasi T."/>
            <person name="Lenhard B."/>
            <person name="Wells C."/>
            <person name="Kodzius R."/>
            <person name="Shimokawa K."/>
            <person name="Bajic V.B."/>
            <person name="Brenner S.E."/>
            <person name="Batalov S."/>
            <person name="Forrest A.R."/>
            <person name="Zavolan M."/>
            <person name="Davis M.J."/>
            <person name="Wilming L.G."/>
            <person name="Aidinis V."/>
            <person name="Allen J.E."/>
            <person name="Ambesi-Impiombato A."/>
            <person name="Apweiler R."/>
            <person name="Aturaliya R.N."/>
            <person name="Bailey T.L."/>
            <person name="Bansal M."/>
            <person name="Baxter L."/>
            <person name="Beisel K.W."/>
            <person name="Bersano T."/>
            <person name="Bono H."/>
            <person name="Chalk A.M."/>
            <person name="Chiu K.P."/>
            <person name="Choudhary V."/>
            <person name="Christoffels A."/>
            <person name="Clutterbuck D.R."/>
            <person name="Crowe M.L."/>
            <person name="Dalla E."/>
            <person name="Dalrymple B.P."/>
            <person name="de Bono B."/>
            <person name="Della Gatta G."/>
            <person name="di Bernardo D."/>
            <person name="Down T."/>
            <person name="Engstrom P."/>
            <person name="Fagiolini M."/>
            <person name="Faulkner G."/>
            <person name="Fletcher C.F."/>
            <person name="Fukushima T."/>
            <person name="Furuno M."/>
            <person name="Futaki S."/>
            <person name="Gariboldi M."/>
            <person name="Georgii-Hemming P."/>
            <person name="Gingeras T.R."/>
            <person name="Gojobori T."/>
            <person name="Green R.E."/>
            <person name="Gustincich S."/>
            <person name="Harbers M."/>
            <person name="Hayashi Y."/>
            <person name="Hensch T.K."/>
            <person name="Hirokawa N."/>
            <person name="Hill D."/>
            <person name="Huminiecki L."/>
            <person name="Iacono M."/>
            <person name="Ikeo K."/>
            <person name="Iwama A."/>
            <person name="Ishikawa T."/>
            <person name="Jakt M."/>
            <person name="Kanapin A."/>
            <person name="Katoh M."/>
            <person name="Kawasawa Y."/>
            <person name="Kelso J."/>
            <person name="Kitamura H."/>
            <person name="Kitano H."/>
            <person name="Kollias G."/>
            <person name="Krishnan S.P."/>
            <person name="Kruger A."/>
            <person name="Kummerfeld S.K."/>
            <person name="Kurochkin I.V."/>
            <person name="Lareau L.F."/>
            <person name="Lazarevic D."/>
            <person name="Lipovich L."/>
            <person name="Liu J."/>
            <person name="Liuni S."/>
            <person name="McWilliam S."/>
            <person name="Madan Babu M."/>
            <person name="Madera M."/>
            <person name="Marchionni L."/>
            <person name="Matsuda H."/>
            <person name="Matsuzawa S."/>
            <person name="Miki H."/>
            <person name="Mignone F."/>
            <person name="Miyake S."/>
            <person name="Morris K."/>
            <person name="Mottagui-Tabar S."/>
            <person name="Mulder N."/>
            <person name="Nakano N."/>
            <person name="Nakauchi H."/>
            <person name="Ng P."/>
            <person name="Nilsson R."/>
            <person name="Nishiguchi S."/>
            <person name="Nishikawa S."/>
            <person name="Nori F."/>
            <person name="Ohara O."/>
            <person name="Okazaki Y."/>
            <person name="Orlando V."/>
            <person name="Pang K.C."/>
            <person name="Pavan W.J."/>
            <person name="Pavesi G."/>
            <person name="Pesole G."/>
            <person name="Petrovsky N."/>
            <person name="Piazza S."/>
            <person name="Reed J."/>
            <person name="Reid J.F."/>
            <person name="Ring B.Z."/>
            <person name="Ringwald M."/>
            <person name="Rost B."/>
            <person name="Ruan Y."/>
            <person name="Salzberg S.L."/>
            <person name="Sandelin A."/>
            <person name="Schneider C."/>
            <person name="Schoenbach C."/>
            <person name="Sekiguchi K."/>
            <person name="Semple C.A."/>
            <person name="Seno S."/>
            <person name="Sessa L."/>
            <person name="Sheng Y."/>
            <person name="Shibata Y."/>
            <person name="Shimada H."/>
            <person name="Shimada K."/>
            <person name="Silva D."/>
            <person name="Sinclair B."/>
            <person name="Sperling S."/>
            <person name="Stupka E."/>
            <person name="Sugiura K."/>
            <person name="Sultana R."/>
            <person name="Takenaka Y."/>
            <person name="Taki K."/>
            <person name="Tammoja K."/>
            <person name="Tan S.L."/>
            <person name="Tang S."/>
            <person name="Taylor M.S."/>
            <person name="Tegner J."/>
            <person name="Teichmann S.A."/>
            <person name="Ueda H.R."/>
            <person name="van Nimwegen E."/>
            <person name="Verardo R."/>
            <person name="Wei C.L."/>
            <person name="Yagi K."/>
            <person name="Yamanishi H."/>
            <person name="Zabarovsky E."/>
            <person name="Zhu S."/>
            <person name="Zimmer A."/>
            <person name="Hide W."/>
            <person name="Bult C."/>
            <person name="Grimmond S.M."/>
            <person name="Teasdale R.D."/>
            <person name="Liu E.T."/>
            <person name="Brusic V."/>
            <person name="Quackenbush J."/>
            <person name="Wahlestedt C."/>
            <person name="Mattick J.S."/>
            <person name="Hume D.A."/>
            <person name="Kai C."/>
            <person name="Sasaki D."/>
            <person name="Tomaru Y."/>
            <person name="Fukuda S."/>
            <person name="Kanamori-Katayama M."/>
            <person name="Suzuki M."/>
            <person name="Aoki J."/>
            <person name="Arakawa T."/>
            <person name="Iida J."/>
            <person name="Imamura K."/>
            <person name="Itoh M."/>
            <person name="Kato T."/>
            <person name="Kawaji H."/>
            <person name="Kawagashira N."/>
            <person name="Kawashima T."/>
            <person name="Kojima M."/>
            <person name="Kondo S."/>
            <person name="Konno H."/>
            <person name="Nakano K."/>
            <person name="Ninomiya N."/>
            <person name="Nishio T."/>
            <person name="Okada M."/>
            <person name="Plessy C."/>
            <person name="Shibata K."/>
            <person name="Shiraki T."/>
            <person name="Suzuki S."/>
            <person name="Tagami M."/>
            <person name="Waki K."/>
            <person name="Watahiki A."/>
            <person name="Okamura-Oho Y."/>
            <person name="Suzuki H."/>
            <person name="Kawai J."/>
            <person name="Hayashizaki Y."/>
        </authorList>
    </citation>
    <scope>NUCLEOTIDE SEQUENCE [LARGE SCALE MRNA]</scope>
    <source>
        <strain>C57BL/6J</strain>
        <tissue>Head</tissue>
    </source>
</reference>
<reference key="2">
    <citation type="journal article" date="2004" name="J. Biol. Chem.">
        <title>Mouse DESC1 is located within a cluster of seven DESC1-like genes and encodes a type II transmembrane serine protease that forms serpin inhibitory complexes.</title>
        <authorList>
            <person name="Hobson J.P."/>
            <person name="Netzel-Arnett S."/>
            <person name="Szabo R."/>
            <person name="Rehault S.M."/>
            <person name="Church F.C."/>
            <person name="Strickland D.K."/>
            <person name="Lawrence D.A."/>
            <person name="Antalis T.M."/>
            <person name="Bugge T.H."/>
        </authorList>
    </citation>
    <scope>IDENTIFICATION</scope>
</reference>
<reference key="3">
    <citation type="journal article" date="2006" name="Exp. Biol. Med.">
        <title>ECRG1, a novel candidate of tumor suppressor gene in the esophageal carcinoma, triggers a senescent program in NIH3T3 cells.</title>
        <authorList>
            <person name="Zhao N."/>
            <person name="Huang G."/>
            <person name="Guo L."/>
            <person name="Lu S.-H."/>
        </authorList>
    </citation>
    <scope>POSSIBLE FUNCTION</scope>
</reference>
<gene>
    <name type="primary">Tmprss11a</name>
    <name type="synonym">Desc3</name>
    <name type="synonym">Gm7</name>
    <name type="synonym">Hatl1</name>
</gene>
<protein>
    <recommendedName>
        <fullName>Transmembrane protease serine 11A</fullName>
        <ecNumber>3.4.21.-</ecNumber>
    </recommendedName>
    <alternativeName>
        <fullName>Airway trypsin-like protease 1</fullName>
    </alternativeName>
    <alternativeName>
        <fullName>Serine protease DESC3</fullName>
        <shortName>DESC-3</shortName>
    </alternativeName>
</protein>
<comment type="function">
    <text>Probable serine protease which may play a role in cellular senescence. Overexpression inhibits cell growth and induce G1 cell cycle arrest.</text>
</comment>
<comment type="subcellular location">
    <subcellularLocation>
        <location evidence="5">Membrane</location>
        <topology evidence="5">Single-pass type II membrane protein</topology>
    </subcellularLocation>
</comment>
<comment type="similarity">
    <text evidence="4">Belongs to the peptidase S1 family.</text>
</comment>
<feature type="chain" id="PRO_0000299318" description="Transmembrane protease serine 11A">
    <location>
        <begin position="1"/>
        <end position="389"/>
    </location>
</feature>
<feature type="topological domain" description="Cytoplasmic" evidence="2">
    <location>
        <begin position="1"/>
        <end position="23"/>
    </location>
</feature>
<feature type="transmembrane region" description="Helical; Signal-anchor for type II membrane protein" evidence="2">
    <location>
        <begin position="24"/>
        <end position="44"/>
    </location>
</feature>
<feature type="topological domain" description="Extracellular" evidence="2">
    <location>
        <begin position="45"/>
        <end position="389"/>
    </location>
</feature>
<feature type="domain" description="SEA" evidence="3">
    <location>
        <begin position="31"/>
        <end position="148"/>
    </location>
</feature>
<feature type="domain" description="Peptidase S1" evidence="4">
    <location>
        <begin position="158"/>
        <end position="388"/>
    </location>
</feature>
<feature type="active site" description="Charge relay system" evidence="1">
    <location>
        <position position="198"/>
    </location>
</feature>
<feature type="active site" description="Charge relay system" evidence="1">
    <location>
        <position position="243"/>
    </location>
</feature>
<feature type="active site" description="Charge relay system" evidence="1">
    <location>
        <position position="339"/>
    </location>
</feature>
<feature type="glycosylation site" description="N-linked (GlcNAc...) asparagine" evidence="2">
    <location>
        <position position="274"/>
    </location>
</feature>
<feature type="disulfide bond" evidence="4">
    <location>
        <begin position="183"/>
        <end position="199"/>
    </location>
</feature>
<feature type="disulfide bond" evidence="4">
    <location>
        <begin position="308"/>
        <end position="324"/>
    </location>
</feature>
<feature type="disulfide bond" evidence="4">
    <location>
        <begin position="335"/>
        <end position="364"/>
    </location>
</feature>
<dbReference type="EC" id="3.4.21.-"/>
<dbReference type="EMBL" id="AK142820">
    <property type="protein sequence ID" value="BAE25202.1"/>
    <property type="molecule type" value="mRNA"/>
</dbReference>
<dbReference type="CCDS" id="CCDS51531.1"/>
<dbReference type="RefSeq" id="NP_001028405.1">
    <property type="nucleotide sequence ID" value="NM_001033233.2"/>
</dbReference>
<dbReference type="SMR" id="Q3UQ41"/>
<dbReference type="BioGRID" id="228795">
    <property type="interactions" value="8"/>
</dbReference>
<dbReference type="FunCoup" id="Q3UQ41">
    <property type="interactions" value="18"/>
</dbReference>
<dbReference type="STRING" id="10090.ENSMUSP00000098634"/>
<dbReference type="MEROPS" id="S01.292"/>
<dbReference type="GlyCosmos" id="Q3UQ41">
    <property type="glycosylation" value="1 site, No reported glycans"/>
</dbReference>
<dbReference type="GlyGen" id="Q3UQ41">
    <property type="glycosylation" value="1 site"/>
</dbReference>
<dbReference type="PhosphoSitePlus" id="Q3UQ41"/>
<dbReference type="PaxDb" id="10090-ENSMUSP00000098634"/>
<dbReference type="ProteomicsDB" id="259212"/>
<dbReference type="Antibodypedia" id="57609">
    <property type="antibodies" value="78 antibodies from 22 providers"/>
</dbReference>
<dbReference type="DNASU" id="194597"/>
<dbReference type="Ensembl" id="ENSMUST00000101073.3">
    <property type="protein sequence ID" value="ENSMUSP00000098634.3"/>
    <property type="gene ID" value="ENSMUSG00000072845.4"/>
</dbReference>
<dbReference type="GeneID" id="194597"/>
<dbReference type="KEGG" id="mmu:194597"/>
<dbReference type="UCSC" id="uc008xxq.1">
    <property type="organism name" value="mouse"/>
</dbReference>
<dbReference type="AGR" id="MGI:2684853"/>
<dbReference type="CTD" id="339967"/>
<dbReference type="MGI" id="MGI:2684853">
    <property type="gene designation" value="Tmprss11a"/>
</dbReference>
<dbReference type="VEuPathDB" id="HostDB:ENSMUSG00000072845"/>
<dbReference type="eggNOG" id="KOG3627">
    <property type="taxonomic scope" value="Eukaryota"/>
</dbReference>
<dbReference type="GeneTree" id="ENSGT00940000161698"/>
<dbReference type="HOGENOM" id="CLU_006842_19_0_1"/>
<dbReference type="InParanoid" id="Q3UQ41"/>
<dbReference type="OMA" id="DIKSGMF"/>
<dbReference type="OrthoDB" id="9425590at2759"/>
<dbReference type="PhylomeDB" id="Q3UQ41"/>
<dbReference type="TreeFam" id="TF351684"/>
<dbReference type="BioGRID-ORCS" id="194597">
    <property type="hits" value="1 hit in 77 CRISPR screens"/>
</dbReference>
<dbReference type="PRO" id="PR:Q3UQ41"/>
<dbReference type="Proteomes" id="UP000000589">
    <property type="component" value="Chromosome 5"/>
</dbReference>
<dbReference type="RNAct" id="Q3UQ41">
    <property type="molecule type" value="protein"/>
</dbReference>
<dbReference type="Bgee" id="ENSMUSG00000072845">
    <property type="expression patterns" value="Expressed in conjunctival fornix and 39 other cell types or tissues"/>
</dbReference>
<dbReference type="GO" id="GO:0005576">
    <property type="term" value="C:extracellular region"/>
    <property type="evidence" value="ECO:0007669"/>
    <property type="project" value="InterPro"/>
</dbReference>
<dbReference type="GO" id="GO:0005886">
    <property type="term" value="C:plasma membrane"/>
    <property type="evidence" value="ECO:0007669"/>
    <property type="project" value="InterPro"/>
</dbReference>
<dbReference type="GO" id="GO:0004252">
    <property type="term" value="F:serine-type endopeptidase activity"/>
    <property type="evidence" value="ECO:0007669"/>
    <property type="project" value="InterPro"/>
</dbReference>
<dbReference type="GO" id="GO:0008236">
    <property type="term" value="F:serine-type peptidase activity"/>
    <property type="evidence" value="ECO:0000266"/>
    <property type="project" value="MGI"/>
</dbReference>
<dbReference type="GO" id="GO:0006508">
    <property type="term" value="P:proteolysis"/>
    <property type="evidence" value="ECO:0007669"/>
    <property type="project" value="UniProtKB-KW"/>
</dbReference>
<dbReference type="GO" id="GO:0046718">
    <property type="term" value="P:symbiont entry into host cell"/>
    <property type="evidence" value="ECO:0000266"/>
    <property type="project" value="MGI"/>
</dbReference>
<dbReference type="CDD" id="cd00190">
    <property type="entry name" value="Tryp_SPc"/>
    <property type="match status" value="1"/>
</dbReference>
<dbReference type="FunFam" id="2.40.10.10:FF:000003">
    <property type="entry name" value="Transmembrane serine protease 3"/>
    <property type="match status" value="1"/>
</dbReference>
<dbReference type="Gene3D" id="3.30.70.960">
    <property type="entry name" value="SEA domain"/>
    <property type="match status" value="1"/>
</dbReference>
<dbReference type="Gene3D" id="2.40.10.10">
    <property type="entry name" value="Trypsin-like serine proteases"/>
    <property type="match status" value="2"/>
</dbReference>
<dbReference type="InterPro" id="IPR017329">
    <property type="entry name" value="Pept_S1A_HAT/DESC1"/>
</dbReference>
<dbReference type="InterPro" id="IPR009003">
    <property type="entry name" value="Peptidase_S1_PA"/>
</dbReference>
<dbReference type="InterPro" id="IPR043504">
    <property type="entry name" value="Peptidase_S1_PA_chymotrypsin"/>
</dbReference>
<dbReference type="InterPro" id="IPR001314">
    <property type="entry name" value="Peptidase_S1A"/>
</dbReference>
<dbReference type="InterPro" id="IPR000082">
    <property type="entry name" value="SEA_dom"/>
</dbReference>
<dbReference type="InterPro" id="IPR036364">
    <property type="entry name" value="SEA_dom_sf"/>
</dbReference>
<dbReference type="InterPro" id="IPR001254">
    <property type="entry name" value="Trypsin_dom"/>
</dbReference>
<dbReference type="InterPro" id="IPR018114">
    <property type="entry name" value="TRYPSIN_HIS"/>
</dbReference>
<dbReference type="InterPro" id="IPR033116">
    <property type="entry name" value="TRYPSIN_SER"/>
</dbReference>
<dbReference type="PANTHER" id="PTHR24252">
    <property type="entry name" value="ACROSIN-RELATED"/>
    <property type="match status" value="1"/>
</dbReference>
<dbReference type="PANTHER" id="PTHR24252:SF17">
    <property type="entry name" value="SUPPRESSOR OF TUMORIGENICITY 14 PROTEIN HOMOLOG-RELATED"/>
    <property type="match status" value="1"/>
</dbReference>
<dbReference type="Pfam" id="PF01390">
    <property type="entry name" value="SEA"/>
    <property type="match status" value="1"/>
</dbReference>
<dbReference type="Pfam" id="PF00089">
    <property type="entry name" value="Trypsin"/>
    <property type="match status" value="1"/>
</dbReference>
<dbReference type="PIRSF" id="PIRSF037941">
    <property type="entry name" value="TMPRSS11ABCDE"/>
    <property type="match status" value="1"/>
</dbReference>
<dbReference type="PRINTS" id="PR00722">
    <property type="entry name" value="CHYMOTRYPSIN"/>
</dbReference>
<dbReference type="SMART" id="SM00020">
    <property type="entry name" value="Tryp_SPc"/>
    <property type="match status" value="1"/>
</dbReference>
<dbReference type="SUPFAM" id="SSF82671">
    <property type="entry name" value="SEA domain"/>
    <property type="match status" value="1"/>
</dbReference>
<dbReference type="SUPFAM" id="SSF50494">
    <property type="entry name" value="Trypsin-like serine proteases"/>
    <property type="match status" value="1"/>
</dbReference>
<dbReference type="PROSITE" id="PS50024">
    <property type="entry name" value="SEA"/>
    <property type="match status" value="1"/>
</dbReference>
<dbReference type="PROSITE" id="PS50240">
    <property type="entry name" value="TRYPSIN_DOM"/>
    <property type="match status" value="1"/>
</dbReference>
<dbReference type="PROSITE" id="PS00134">
    <property type="entry name" value="TRYPSIN_HIS"/>
    <property type="match status" value="1"/>
</dbReference>
<dbReference type="PROSITE" id="PS00135">
    <property type="entry name" value="TRYPSIN_SER"/>
    <property type="match status" value="1"/>
</dbReference>
<evidence type="ECO:0000250" key="1"/>
<evidence type="ECO:0000255" key="2"/>
<evidence type="ECO:0000255" key="3">
    <source>
        <dbReference type="PROSITE-ProRule" id="PRU00188"/>
    </source>
</evidence>
<evidence type="ECO:0000255" key="4">
    <source>
        <dbReference type="PROSITE-ProRule" id="PRU00274"/>
    </source>
</evidence>
<evidence type="ECO:0000305" key="5"/>
<keyword id="KW-0131">Cell cycle</keyword>
<keyword id="KW-1015">Disulfide bond</keyword>
<keyword id="KW-0325">Glycoprotein</keyword>
<keyword id="KW-0378">Hydrolase</keyword>
<keyword id="KW-0472">Membrane</keyword>
<keyword id="KW-0645">Protease</keyword>
<keyword id="KW-1185">Reference proteome</keyword>
<keyword id="KW-0720">Serine protease</keyword>
<keyword id="KW-0735">Signal-anchor</keyword>
<keyword id="KW-0812">Transmembrane</keyword>
<keyword id="KW-1133">Transmembrane helix</keyword>
<accession>Q3UQ41</accession>
<name>TM11A_MOUSE</name>